<feature type="chain" id="PRO_1000064706" description="Ribosome maturation factor RimP">
    <location>
        <begin position="1"/>
        <end position="154"/>
    </location>
</feature>
<protein>
    <recommendedName>
        <fullName evidence="1">Ribosome maturation factor RimP</fullName>
    </recommendedName>
</protein>
<organism>
    <name type="scientific">Clostridium perfringens (strain ATCC 13124 / DSM 756 / JCM 1290 / NCIMB 6125 / NCTC 8237 / Type A)</name>
    <dbReference type="NCBI Taxonomy" id="195103"/>
    <lineage>
        <taxon>Bacteria</taxon>
        <taxon>Bacillati</taxon>
        <taxon>Bacillota</taxon>
        <taxon>Clostridia</taxon>
        <taxon>Eubacteriales</taxon>
        <taxon>Clostridiaceae</taxon>
        <taxon>Clostridium</taxon>
    </lineage>
</organism>
<reference key="1">
    <citation type="journal article" date="2006" name="Genome Res.">
        <title>Skewed genomic variability in strains of the toxigenic bacterial pathogen, Clostridium perfringens.</title>
        <authorList>
            <person name="Myers G.S.A."/>
            <person name="Rasko D.A."/>
            <person name="Cheung J.K."/>
            <person name="Ravel J."/>
            <person name="Seshadri R."/>
            <person name="DeBoy R.T."/>
            <person name="Ren Q."/>
            <person name="Varga J."/>
            <person name="Awad M.M."/>
            <person name="Brinkac L.M."/>
            <person name="Daugherty S.C."/>
            <person name="Haft D.H."/>
            <person name="Dodson R.J."/>
            <person name="Madupu R."/>
            <person name="Nelson W.C."/>
            <person name="Rosovitz M.J."/>
            <person name="Sullivan S.A."/>
            <person name="Khouri H."/>
            <person name="Dimitrov G.I."/>
            <person name="Watkins K.L."/>
            <person name="Mulligan S."/>
            <person name="Benton J."/>
            <person name="Radune D."/>
            <person name="Fisher D.J."/>
            <person name="Atkins H.S."/>
            <person name="Hiscox T."/>
            <person name="Jost B.H."/>
            <person name="Billington S.J."/>
            <person name="Songer J.G."/>
            <person name="McClane B.A."/>
            <person name="Titball R.W."/>
            <person name="Rood J.I."/>
            <person name="Melville S.B."/>
            <person name="Paulsen I.T."/>
        </authorList>
    </citation>
    <scope>NUCLEOTIDE SEQUENCE [LARGE SCALE GENOMIC DNA]</scope>
    <source>
        <strain>ATCC 13124 / DSM 756 / JCM 1290 / NCIMB 6125 / NCTC 8237 / S 107 / Type A</strain>
    </source>
</reference>
<sequence length="154" mass="17836">MKKEQLVADLEALCAPIVKEKGYDLYHIEYVKENNEYYLRLYIEKPEERISLRDCEIVSRALSDMLDIEDPIKDAYFLEVSSPGLNRRLHSDEHFNRFIGKEVFVGFKSSLSGRKNVKGILKDVQENEIIVECEGNEIKVPKDKIKTANLEGEI</sequence>
<proteinExistence type="inferred from homology"/>
<dbReference type="EMBL" id="CP000246">
    <property type="protein sequence ID" value="ABG82930.1"/>
    <property type="molecule type" value="Genomic_DNA"/>
</dbReference>
<dbReference type="RefSeq" id="WP_003459796.1">
    <property type="nucleotide sequence ID" value="NC_008261.1"/>
</dbReference>
<dbReference type="SMR" id="Q0TPR3"/>
<dbReference type="STRING" id="195103.CPF_1944"/>
<dbReference type="PaxDb" id="195103-CPF_1944"/>
<dbReference type="GeneID" id="93001772"/>
<dbReference type="KEGG" id="cpf:CPF_1944"/>
<dbReference type="eggNOG" id="COG0779">
    <property type="taxonomic scope" value="Bacteria"/>
</dbReference>
<dbReference type="HOGENOM" id="CLU_070525_2_2_9"/>
<dbReference type="Proteomes" id="UP000001823">
    <property type="component" value="Chromosome"/>
</dbReference>
<dbReference type="GO" id="GO:0005829">
    <property type="term" value="C:cytosol"/>
    <property type="evidence" value="ECO:0007669"/>
    <property type="project" value="TreeGrafter"/>
</dbReference>
<dbReference type="GO" id="GO:0000028">
    <property type="term" value="P:ribosomal small subunit assembly"/>
    <property type="evidence" value="ECO:0007669"/>
    <property type="project" value="TreeGrafter"/>
</dbReference>
<dbReference type="GO" id="GO:0006412">
    <property type="term" value="P:translation"/>
    <property type="evidence" value="ECO:0007669"/>
    <property type="project" value="TreeGrafter"/>
</dbReference>
<dbReference type="CDD" id="cd01734">
    <property type="entry name" value="YlxS_C"/>
    <property type="match status" value="1"/>
</dbReference>
<dbReference type="FunFam" id="3.30.300.70:FF:000001">
    <property type="entry name" value="Ribosome maturation factor RimP"/>
    <property type="match status" value="1"/>
</dbReference>
<dbReference type="Gene3D" id="2.30.30.180">
    <property type="entry name" value="Ribosome maturation factor RimP, C-terminal domain"/>
    <property type="match status" value="1"/>
</dbReference>
<dbReference type="Gene3D" id="3.30.300.70">
    <property type="entry name" value="RimP-like superfamily, N-terminal"/>
    <property type="match status" value="1"/>
</dbReference>
<dbReference type="HAMAP" id="MF_01077">
    <property type="entry name" value="RimP"/>
    <property type="match status" value="1"/>
</dbReference>
<dbReference type="InterPro" id="IPR003728">
    <property type="entry name" value="Ribosome_maturation_RimP"/>
</dbReference>
<dbReference type="InterPro" id="IPR028998">
    <property type="entry name" value="RimP_C"/>
</dbReference>
<dbReference type="InterPro" id="IPR036847">
    <property type="entry name" value="RimP_C_sf"/>
</dbReference>
<dbReference type="InterPro" id="IPR028989">
    <property type="entry name" value="RimP_N"/>
</dbReference>
<dbReference type="InterPro" id="IPR035956">
    <property type="entry name" value="RimP_N_sf"/>
</dbReference>
<dbReference type="NCBIfam" id="NF000934">
    <property type="entry name" value="PRK00092.3-1"/>
    <property type="match status" value="1"/>
</dbReference>
<dbReference type="PANTHER" id="PTHR33867">
    <property type="entry name" value="RIBOSOME MATURATION FACTOR RIMP"/>
    <property type="match status" value="1"/>
</dbReference>
<dbReference type="PANTHER" id="PTHR33867:SF1">
    <property type="entry name" value="RIBOSOME MATURATION FACTOR RIMP"/>
    <property type="match status" value="1"/>
</dbReference>
<dbReference type="Pfam" id="PF17384">
    <property type="entry name" value="DUF150_C"/>
    <property type="match status" value="1"/>
</dbReference>
<dbReference type="Pfam" id="PF02576">
    <property type="entry name" value="RimP_N"/>
    <property type="match status" value="1"/>
</dbReference>
<dbReference type="SUPFAM" id="SSF74942">
    <property type="entry name" value="YhbC-like, C-terminal domain"/>
    <property type="match status" value="1"/>
</dbReference>
<dbReference type="SUPFAM" id="SSF75420">
    <property type="entry name" value="YhbC-like, N-terminal domain"/>
    <property type="match status" value="1"/>
</dbReference>
<accession>Q0TPR3</accession>
<comment type="function">
    <text evidence="1">Required for maturation of 30S ribosomal subunits.</text>
</comment>
<comment type="subcellular location">
    <subcellularLocation>
        <location evidence="1">Cytoplasm</location>
    </subcellularLocation>
</comment>
<comment type="similarity">
    <text evidence="1">Belongs to the RimP family.</text>
</comment>
<keyword id="KW-0963">Cytoplasm</keyword>
<keyword id="KW-0690">Ribosome biogenesis</keyword>
<gene>
    <name evidence="1" type="primary">rimP</name>
    <name type="ordered locus">CPF_1944</name>
</gene>
<evidence type="ECO:0000255" key="1">
    <source>
        <dbReference type="HAMAP-Rule" id="MF_01077"/>
    </source>
</evidence>
<name>RIMP_CLOP1</name>